<comment type="function">
    <text evidence="1">Binds as a heterodimer with protein bS6 to the central domain of the 16S rRNA, where it helps stabilize the platform of the 30S subunit.</text>
</comment>
<comment type="subunit">
    <text evidence="1">Part of the 30S ribosomal subunit. Forms a tight heterodimer with protein bS6.</text>
</comment>
<comment type="similarity">
    <text evidence="1">Belongs to the bacterial ribosomal protein bS18 family.</text>
</comment>
<protein>
    <recommendedName>
        <fullName evidence="1">Small ribosomal subunit protein bS18</fullName>
    </recommendedName>
    <alternativeName>
        <fullName evidence="2">30S ribosomal protein S18</fullName>
    </alternativeName>
</protein>
<evidence type="ECO:0000255" key="1">
    <source>
        <dbReference type="HAMAP-Rule" id="MF_00270"/>
    </source>
</evidence>
<evidence type="ECO:0000305" key="2"/>
<reference key="1">
    <citation type="journal article" date="2011" name="Proc. Natl. Acad. Sci. U.S.A.">
        <title>Genomic anatomy of Escherichia coli O157:H7 outbreaks.</title>
        <authorList>
            <person name="Eppinger M."/>
            <person name="Mammel M.K."/>
            <person name="Leclerc J.E."/>
            <person name="Ravel J."/>
            <person name="Cebula T.A."/>
        </authorList>
    </citation>
    <scope>NUCLEOTIDE SEQUENCE [LARGE SCALE GENOMIC DNA]</scope>
    <source>
        <strain>EC4115 / EHEC</strain>
    </source>
</reference>
<organism>
    <name type="scientific">Escherichia coli O157:H7 (strain EC4115 / EHEC)</name>
    <dbReference type="NCBI Taxonomy" id="444450"/>
    <lineage>
        <taxon>Bacteria</taxon>
        <taxon>Pseudomonadati</taxon>
        <taxon>Pseudomonadota</taxon>
        <taxon>Gammaproteobacteria</taxon>
        <taxon>Enterobacterales</taxon>
        <taxon>Enterobacteriaceae</taxon>
        <taxon>Escherichia</taxon>
    </lineage>
</organism>
<dbReference type="EMBL" id="CP001164">
    <property type="protein sequence ID" value="ACI39360.1"/>
    <property type="molecule type" value="Genomic_DNA"/>
</dbReference>
<dbReference type="RefSeq" id="WP_000135199.1">
    <property type="nucleotide sequence ID" value="NC_011353.1"/>
</dbReference>
<dbReference type="SMR" id="B5Z2K7"/>
<dbReference type="GeneID" id="98186237"/>
<dbReference type="KEGG" id="ecf:ECH74115_5717"/>
<dbReference type="HOGENOM" id="CLU_148710_2_3_6"/>
<dbReference type="GO" id="GO:0022627">
    <property type="term" value="C:cytosolic small ribosomal subunit"/>
    <property type="evidence" value="ECO:0007669"/>
    <property type="project" value="TreeGrafter"/>
</dbReference>
<dbReference type="GO" id="GO:0070181">
    <property type="term" value="F:small ribosomal subunit rRNA binding"/>
    <property type="evidence" value="ECO:0007669"/>
    <property type="project" value="TreeGrafter"/>
</dbReference>
<dbReference type="GO" id="GO:0003735">
    <property type="term" value="F:structural constituent of ribosome"/>
    <property type="evidence" value="ECO:0007669"/>
    <property type="project" value="InterPro"/>
</dbReference>
<dbReference type="GO" id="GO:0006412">
    <property type="term" value="P:translation"/>
    <property type="evidence" value="ECO:0007669"/>
    <property type="project" value="UniProtKB-UniRule"/>
</dbReference>
<dbReference type="FunFam" id="4.10.640.10:FF:000001">
    <property type="entry name" value="30S ribosomal protein S18"/>
    <property type="match status" value="1"/>
</dbReference>
<dbReference type="Gene3D" id="4.10.640.10">
    <property type="entry name" value="Ribosomal protein S18"/>
    <property type="match status" value="1"/>
</dbReference>
<dbReference type="HAMAP" id="MF_00270">
    <property type="entry name" value="Ribosomal_bS18"/>
    <property type="match status" value="1"/>
</dbReference>
<dbReference type="InterPro" id="IPR001648">
    <property type="entry name" value="Ribosomal_bS18"/>
</dbReference>
<dbReference type="InterPro" id="IPR018275">
    <property type="entry name" value="Ribosomal_bS18_CS"/>
</dbReference>
<dbReference type="InterPro" id="IPR036870">
    <property type="entry name" value="Ribosomal_bS18_sf"/>
</dbReference>
<dbReference type="NCBIfam" id="TIGR00165">
    <property type="entry name" value="S18"/>
    <property type="match status" value="1"/>
</dbReference>
<dbReference type="PANTHER" id="PTHR13479">
    <property type="entry name" value="30S RIBOSOMAL PROTEIN S18"/>
    <property type="match status" value="1"/>
</dbReference>
<dbReference type="PANTHER" id="PTHR13479:SF40">
    <property type="entry name" value="SMALL RIBOSOMAL SUBUNIT PROTEIN BS18M"/>
    <property type="match status" value="1"/>
</dbReference>
<dbReference type="Pfam" id="PF01084">
    <property type="entry name" value="Ribosomal_S18"/>
    <property type="match status" value="1"/>
</dbReference>
<dbReference type="PRINTS" id="PR00974">
    <property type="entry name" value="RIBOSOMALS18"/>
</dbReference>
<dbReference type="SUPFAM" id="SSF46911">
    <property type="entry name" value="Ribosomal protein S18"/>
    <property type="match status" value="1"/>
</dbReference>
<dbReference type="PROSITE" id="PS00057">
    <property type="entry name" value="RIBOSOMAL_S18"/>
    <property type="match status" value="1"/>
</dbReference>
<feature type="chain" id="PRO_1000114418" description="Small ribosomal subunit protein bS18">
    <location>
        <begin position="1"/>
        <end position="75"/>
    </location>
</feature>
<accession>B5Z2K7</accession>
<name>RS18_ECO5E</name>
<gene>
    <name evidence="1" type="primary">rpsR</name>
    <name type="ordered locus">ECH74115_5717</name>
</gene>
<proteinExistence type="inferred from homology"/>
<keyword id="KW-0687">Ribonucleoprotein</keyword>
<keyword id="KW-0689">Ribosomal protein</keyword>
<keyword id="KW-0694">RNA-binding</keyword>
<keyword id="KW-0699">rRNA-binding</keyword>
<sequence length="75" mass="8986">MARYFRRRKFCRFTAEGVQEIDYKDIATLKNYITESGKIVPSRITGTRAKYQRQLARAIKRARYLSLLPYTDRHQ</sequence>